<sequence length="4146" mass="473505">MLLAGAGGSSGDGQDGVASGPAESAAGILGRLHQLHGLLSLESGVGAEGAHSLLHNLAEECLVSALGSSALDLNTSLIFSKEFGLLAFVRKSLSSDEFKDCREEALKFLYTFLEKIGSNVQPYAMDIKTLCVIVYTKDRAAKCKIPSLELLIKLLQLLKNSIIIEEFKIGEIFNKFYGELATKSKLSDTVLEKVYELLGILGEVQPCEMTYNSEKLFKAFLGELKAQMNSSTRNPKFPVIAGCLKGLSALMINFTKTMEEDPRTSKEIFDYTVKAISPQVEMKRYAVPSAGLNLLALHASQFSSYLMDDYQSLFEVISKWCGHTNGEMKKLAFAALDSFLKQIAHLVASDAETHKNKLHFFMEQFYEIIRKMDSSNKELSIAIRGYGLFAAPCKAVNAKNVDLMYIELIQRCKQMYLTEADTEEDNVYQLPNFLQSVASVILHMDSIPEVYTPILERLLVVQIDSFPQYSLKMQSSCCKAVLKVFLSLAGKGPVLWSLISTVVHQGLIRVCSKPVVLAQDGKEGSEAETAAATGEVRAGKWKVPTYKDYLDLFRNLLRCDQLKDSIFSDEIFSTVNSPLQSLNRLLYDELMKSILKIIEKLDLSLQKQDTGQEDDGGINNLLINATSDPAGNLYATKPKDFTAFVNLVEFCSEILPKEHIEYFESWVYVFGYELVLQSTRLPLISGFYKLLSVVMKNAKKSRYFEGFTSKIYKKAPEDPERLSCFALFAKFGKEVSSKIRQFKDELLASCLTFVLHLPHDIIMMDIKAYIPALQTAFKLGLSCPPLADVGLNALQYWSTNIPSDILKPYYKDIIPLLDGYLTNLSSTNESLSTLDMVRISRSLHKGFNKQLIQQLKRMKTLSVKEESSLTAVRNRVVRILGSLGGQINRSLVTAASTEEMIKRHVSWDTEKRLRFDVPFKDLKPVIYLDMFLPHITELALSTSDRQTKVAACELLHSIVAFMLGKATQMPDDKKTGSSPMYKIYKRTFPVLLRLACDVDKVTEQLYKPLVMSLIHWFTNNKKFESQDTVALLEAILTGIVDPVDSTLRDFCGQCIQEFLRWSIKQTTPDQQAKSPVNTTSLFKRLYSLALHPNAFKRLGAALAFNNIYRDFREETALVENFVFEVLVIYMESLALSHADEKSLGTTQQCSDAVDHLKRIIIRKAASLNKATKRRIPRGFPQGNTVCLFDIVLWLLEQCGRPQTECRHKAMQLFFEFVPLLPGNKPLTAWLDDQVEKEGIIFLINRFEGAGHSDGMHTGIFNIPALHDLHEPFSMHAVLQWLDMLLAALDCYNTFIGMRFLKANTVLGKNAEKSSFLKAAFFFITSLSMENIKAAEQCMGSKSSVFSPHEIEAYNYSKCTIIVRIMEFITMFIDICQQDSLKILENSVFNEPMWELIAITVCDPSSIGFNTADVEVINNLPNICIKLMKALGNTSYRSSLEVSLKKRVTLQSIEELCSVDLYDPGARFNRVKLGSVLSACKQLYKAEFFNSIVPEQVGGQRFGSKLLSVVYKGIAPTNERKSLPSLDISSKRLAEGLLELAFMFGGQCEELVSLLLNTVILSVPLPGTSQRNIINFSHGGYFYTLFAETINTELLNNLDTIVVELMKSSLEDPKMVSCVLNGMLDQSFRQRTIRKQQGVKLVNAVLENWRRLDSWWYKDSPSESKMAVLTLLAKVLQIDSSVCFDINHSAFAEVFKTYTSILTDQKLGLNLKSQAIIILPFFTKLTGEKLTELKNTLDQFVASNFPMKSDEFPKGTLKFNNYVDCIKKFLDALELSQSPMLLQLMTEILCRDERHFMEELFQSSFKKVIKRSSCDTQVILLNTLHNMFKSESLMLNGTLQSLIDRCLLTLLWNCSLDAMISFFTNIISLAMDTLKSRFTKVPEAAFDSQITKKWGYYKMLEVQYSRLSKDEIYSTVNNAYHVSSKPEGNELTKALIKLCYDTFTENMCGETQLLEKRRQYHCAAYNCAISLISCVFSELKFYQGFLFTEKKEKNLLIFENLIDLQRNYTFPIEVEVPMERKKKYFAIRKEARDASSTESDEPSYLSSQSYMADSSLIEEMSQFDFSTGVQSFSYSSQSKMLSQSASRKKEQITEGKTFDDVMEFEMDELNQHECMAAMTGLIKHMNRSEITPKVDEDASPQELPSWMKFLHVKLGNTSTPLNIRLFIAKLIVNTEEVFRPYARFWIGPILQLIVSGNNGGTGIHYMVVETLVTILSWSSIATPNGQAKEEILANRLLEFLMKNVFHEKRAVFRHNLEIIKTVLECWKECLSIPYRLIYEGFSGTDPNTKDNSVGIQLLGLALANNFSPLDPKCGIDPERYFQSLANNLGLTRFKEVYIAAAEVIGLVLRYIVQNEKRTEAPVFDYVVKELKRHQTNNKEDKFIMCLNKVVKNFPPFADRFMTIVLFLLPKLHGVLKTQCLEIIMHRAEDIPDLFIELKNKDFCQIMNNRDDERQRVCLDIIYKILSKLTPAELHEFLIPVTAFSSHSFPVCRERMYDIFMWIYDNYRDHESQNDSKSVEVFNMAKEGLLQGLVDENTELQLIVRNFWSDETRLPSNTTERMLAILSSLYSPKIEKHYLSLATNLLLEMTSKSPDYIRKMFEHPLSECKFQDYTVDSSWRFRSSVLTPMFVETQLSQSMQRSRAQGTIEADEPIGGQLRATQQHYQFTPTQNIGGRSSFNWLTGSSMDTLADYSVESPESLPSALLFVNKRNENVRRVPLKPLGPNFGMRRLGLPGDVTDSKTKSMEDRSDILRLRRRFLKDREKLSLIYARKGTAEQKREKAIKIEQKMKQDAQITLYRNYRQGELPDIQISYSNLIAPLQALAQRDPTMAKLLFSSLFSGILTDTASDISVTDKLLKQFNSFLSNSLSYFPPFIACVQDMCYQHDELLHLNPANISTSCLASLQQPLGILLLEKGLLHMKVPDEPPAKKMRKEKEKAEIPPDIVRWIELAKLYRSIGDYDVLRGIFSGKIGAKSITQCALNAEAKSDYAKAAKLYDEALTETFSDGDPTDAEKDFWELASLECYNHLTEWKPLEYCSTVNIDTGKPPDLNKMWSDPFYQETYLPYMIRSKLKMLLGGNNDQTLLTFVDEAMKVEQRKVLMETFYSQELSLLYILQDDFDRAKYYINNGIQVFMQNYSSIDCLLYQSRLTKLQSVQALTETQDFISFIRKPGNVSSSSLRKLFQGWMKRYPDSKMDPMNIWDDIISNRCFFLDKIQDVAVGHPQLVDESMEVDDLADGNEAMEVDRQEDIAVMINKCRFTMKMKMVDSARKQNNFSVAMKLLKDLHRESKTNEDWSVKWIHSYSRYSHSRSRDLTCSEQILTALKTIPLLEESKTEYLTKNTKACRYQNMLLGDTYRIMADAVCKEPDCLYKIEDGKAGKVKDLSESPENVVGGLYRKSLHYFTNAVRKATEEEQSHSTDQIDVRGIIKAYMTLVDFCDSHLRKVEEESAVMDRADYQNFPEIMVEKMIKALKLNSSEARLKFPRMLQIIEQYPSETLDLMARENCTVPCWQFIGWISQMMAMLDKKESIAVQHIIEEIAENYPQALVYPFMVSGESYNFEDTVVGHKNREYVNRIKSKLDKDNVAQDFIRALEQLSNPPMIFQDWWEDVSNELSKPNVNKNKIKELYKEMYTNLGNPKDHFMGAFRRRFCEKYTKDFDKAFGPEGSKLLNIKCDGFNKTVGPLITKMKEQQKEPGNLKEYSPWMSEFKPEFLRNELEIPGQYSGRSKPMPEYHVKISGFDERVSVMASIRKPKRIIVRGNDEREYPFLVKGGEDLRQDQRIEQLFEIMNIILSQDAACSQRHMQLKTYQVIPMTTRIGLIEWLENTCTLKEFILNTMTEDEAKIYNSKTTNGPLYHYNAWLDKKEKVGDARQHVTSYTRCDRTNTVASFREREALVPKDLLRRAFVKMSTTPEAFLSLRSHFARSHALLCVSHWIVGIGDRHLSNFMINMETGGMIGIDFGHAFGTATQFLPVPELMPFRLTRQIVNLMLPMKDSGLFDSVMVHSLRAYRSDPGLLVTTMDVFIKEPSLDWKNLELKQMKKKGEWKKAVDVTSHNWHPQQKIHCAKRKLDGANPCEITCEELRLGHESAPEYKDFIAVARGDKKHNRRTNEPPDGLTEETQVQCLIDQATDPNILGRVWKGWEPWI</sequence>
<organism>
    <name type="scientific">Xenopus laevis</name>
    <name type="common">African clawed frog</name>
    <dbReference type="NCBI Taxonomy" id="8355"/>
    <lineage>
        <taxon>Eukaryota</taxon>
        <taxon>Metazoa</taxon>
        <taxon>Chordata</taxon>
        <taxon>Craniata</taxon>
        <taxon>Vertebrata</taxon>
        <taxon>Euteleostomi</taxon>
        <taxon>Amphibia</taxon>
        <taxon>Batrachia</taxon>
        <taxon>Anura</taxon>
        <taxon>Pipoidea</taxon>
        <taxon>Pipidae</taxon>
        <taxon>Xenopodinae</taxon>
        <taxon>Xenopus</taxon>
        <taxon>Xenopus</taxon>
    </lineage>
</organism>
<reference key="1">
    <citation type="journal article" date="2000" name="Immunogenetics">
        <title>Identification of four highly conserved regions in DNA-PKcs.</title>
        <authorList>
            <person name="Fujimori A."/>
            <person name="Araki R."/>
            <person name="Fukumura R."/>
            <person name="Ohhata T."/>
            <person name="Takahashi H."/>
            <person name="Kawahara A."/>
            <person name="Tatsumi K."/>
            <person name="Abe M."/>
        </authorList>
    </citation>
    <scope>NUCLEOTIDE SEQUENCE [MRNA]</scope>
    <source>
        <strain>J</strain>
        <tissue>Spleen</tissue>
    </source>
</reference>
<reference key="2">
    <citation type="journal article" date="1997" name="Gene">
        <title>mRNA encoding the catalytic subunit of DNA-dependent protein kinase is widely expressed in Xenopus cells.</title>
        <authorList>
            <person name="Labhart P."/>
        </authorList>
    </citation>
    <scope>NUCLEOTIDE SEQUENCE [MRNA] OF 3507-4146</scope>
    <source>
        <tissue>Liver</tissue>
    </source>
</reference>
<comment type="function">
    <text evidence="1 2">Serine/threonine-protein kinase that acts as a molecular sensor for DNA damage. Involved in DNA nonhomologous end joining (NHEJ) required for double-strand break (DSB) repair and V(D)J recombination. Must be bound to DNA to express its catalytic properties. Promotes processing of hairpin DNA structures in V(D)J recombination by activation of the hairpin endonuclease artemis (DCLRE1C). Recruited by XRCC5 and XRCC6 to DNA ends and is required to (1) protect and align broken ends of DNA, thereby preventing their degradation, (2) and sequester the DSB for repair by NHEJ. Acts as a scaffold protein to aid the localization of DNA repair proteins to the site of damage. The assembly of the DNA-PK complex at DNA ends is also required for the NHEJ ligation step. Found at the ends of chromosomes, suggesting a further role in the maintenance of telomeric stability and the prevention of chromosomal end fusion. As part of the DNA-PK complex, involved in the early steps of ribosome assembly by promoting the processing of precursor rRNA into mature 18S rRNA in the small-subunit processome (By similarity). Recognizes the substrate consensus sequence [ST]-Q. Phosphorylates 'Ser-139' of histone variant H2AX, thereby regulating DNA damage response mechanism (By similarity).</text>
</comment>
<comment type="catalytic activity">
    <reaction evidence="1">
        <text>L-seryl-[protein] + ATP = O-phospho-L-seryl-[protein] + ADP + H(+)</text>
        <dbReference type="Rhea" id="RHEA:17989"/>
        <dbReference type="Rhea" id="RHEA-COMP:9863"/>
        <dbReference type="Rhea" id="RHEA-COMP:11604"/>
        <dbReference type="ChEBI" id="CHEBI:15378"/>
        <dbReference type="ChEBI" id="CHEBI:29999"/>
        <dbReference type="ChEBI" id="CHEBI:30616"/>
        <dbReference type="ChEBI" id="CHEBI:83421"/>
        <dbReference type="ChEBI" id="CHEBI:456216"/>
        <dbReference type="EC" id="2.7.11.1"/>
    </reaction>
</comment>
<comment type="catalytic activity">
    <reaction evidence="1">
        <text>L-threonyl-[protein] + ATP = O-phospho-L-threonyl-[protein] + ADP + H(+)</text>
        <dbReference type="Rhea" id="RHEA:46608"/>
        <dbReference type="Rhea" id="RHEA-COMP:11060"/>
        <dbReference type="Rhea" id="RHEA-COMP:11605"/>
        <dbReference type="ChEBI" id="CHEBI:15378"/>
        <dbReference type="ChEBI" id="CHEBI:30013"/>
        <dbReference type="ChEBI" id="CHEBI:30616"/>
        <dbReference type="ChEBI" id="CHEBI:61977"/>
        <dbReference type="ChEBI" id="CHEBI:456216"/>
        <dbReference type="EC" id="2.7.11.1"/>
    </reaction>
</comment>
<comment type="subunit">
    <text evidence="1">DNA-PK is a heterotrimer of prkdc and the Ku dimer (composed of xrcc6/Ku70 and xrcc5/Ku86). Component of the core long-range non-homologous end joining (NHEJ) complex (also named DNA-PK complex) composed of prkdc, lig4, xrcc4, xrcc6/ku70, xrcc5/ku86 and nhej1/xlf. Additional component of the NHEJ complex includes paxx. Following autophosphorylation, prkdc dissociates from DNA.</text>
</comment>
<comment type="subcellular location">
    <subcellularLocation>
        <location evidence="1">Nucleus</location>
    </subcellularLocation>
    <subcellularLocation>
        <location evidence="1">Nucleus</location>
        <location evidence="1">Nucleolus</location>
    </subcellularLocation>
</comment>
<comment type="PTM">
    <text evidence="1 2">Autophosphorylated at two clusters, the T2609 cluster and the S2056 cluster. Autophosphorylated on Ser-2075, Thr-2631, Thr-2659 and Thr-2668. Ser-2075 and Thr-2668 are DNA damage-inducible phosphorylation sites (inducible with ionizing radiation, IR) dephosphorylated by PPP5C (By similarity). Autophosphorylation induces a conformational change that leads to remodeling of the DNA-PK complex, requisite for efficient end processing and DNA repair (By similarity). Autophosphorylation in trans within DNA-PK complexes loaded on DNA ends leads to the dissociation of PRKDC from DNA and the transition into the short-range NHEJ complex (By similarity). Autophosphorylation of the T2609 cluster is required for hematopoietic development and protein synthesis in erythrocytes precursors (By similarity).</text>
</comment>
<comment type="similarity">
    <text evidence="6">Belongs to the PI3/PI4-kinase family.</text>
</comment>
<protein>
    <recommendedName>
        <fullName>DNA-dependent protein kinase catalytic subunit</fullName>
        <shortName>DNA-PK catalytic subunit</shortName>
        <shortName>DNA-PKcs</shortName>
        <ecNumber evidence="1">2.7.11.1</ecNumber>
    </recommendedName>
</protein>
<name>PRKDC_XENLA</name>
<dbReference type="EC" id="2.7.11.1" evidence="1"/>
<dbReference type="EMBL" id="AB016434">
    <property type="protein sequence ID" value="BAA36690.1"/>
    <property type="molecule type" value="mRNA"/>
</dbReference>
<dbReference type="EMBL" id="AF001413">
    <property type="protein sequence ID" value="AAC60340.1"/>
    <property type="molecule type" value="mRNA"/>
</dbReference>
<dbReference type="SMR" id="Q9DEI1"/>
<dbReference type="IntAct" id="Q9DEI1">
    <property type="interactions" value="1"/>
</dbReference>
<dbReference type="GeneID" id="373602"/>
<dbReference type="KEGG" id="xla:373602"/>
<dbReference type="AGR" id="Xenbase:XB-GENE-866368"/>
<dbReference type="CTD" id="373602"/>
<dbReference type="Xenbase" id="XB-GENE-866368">
    <property type="gene designation" value="prkdc.L"/>
</dbReference>
<dbReference type="OrthoDB" id="431717at2759"/>
<dbReference type="Proteomes" id="UP000186698">
    <property type="component" value="Chromosome 6L"/>
</dbReference>
<dbReference type="Bgee" id="373602">
    <property type="expression patterns" value="Expressed in egg cell and 19 other cell types or tissues"/>
</dbReference>
<dbReference type="GO" id="GO:0070419">
    <property type="term" value="C:nonhomologous end joining complex"/>
    <property type="evidence" value="ECO:0000250"/>
    <property type="project" value="UniProtKB"/>
</dbReference>
<dbReference type="GO" id="GO:0005730">
    <property type="term" value="C:nucleolus"/>
    <property type="evidence" value="ECO:0007669"/>
    <property type="project" value="UniProtKB-SubCell"/>
</dbReference>
<dbReference type="GO" id="GO:0005634">
    <property type="term" value="C:nucleus"/>
    <property type="evidence" value="ECO:0000318"/>
    <property type="project" value="GO_Central"/>
</dbReference>
<dbReference type="GO" id="GO:0005524">
    <property type="term" value="F:ATP binding"/>
    <property type="evidence" value="ECO:0007669"/>
    <property type="project" value="UniProtKB-KW"/>
</dbReference>
<dbReference type="GO" id="GO:0004677">
    <property type="term" value="F:DNA-dependent protein kinase activity"/>
    <property type="evidence" value="ECO:0007669"/>
    <property type="project" value="InterPro"/>
</dbReference>
<dbReference type="GO" id="GO:0035979">
    <property type="term" value="F:histone H2AXS139 kinase activity"/>
    <property type="evidence" value="ECO:0000250"/>
    <property type="project" value="UniProtKB"/>
</dbReference>
<dbReference type="GO" id="GO:0106310">
    <property type="term" value="F:protein serine kinase activity"/>
    <property type="evidence" value="ECO:0007669"/>
    <property type="project" value="RHEA"/>
</dbReference>
<dbReference type="GO" id="GO:0004674">
    <property type="term" value="F:protein serine/threonine kinase activity"/>
    <property type="evidence" value="ECO:0000250"/>
    <property type="project" value="UniProtKB"/>
</dbReference>
<dbReference type="GO" id="GO:0006302">
    <property type="term" value="P:double-strand break repair"/>
    <property type="evidence" value="ECO:0000318"/>
    <property type="project" value="GO_Central"/>
</dbReference>
<dbReference type="GO" id="GO:0006303">
    <property type="term" value="P:double-strand break repair via nonhomologous end joining"/>
    <property type="evidence" value="ECO:0000315"/>
    <property type="project" value="CACAO"/>
</dbReference>
<dbReference type="GO" id="GO:0033152">
    <property type="term" value="P:immunoglobulin V(D)J recombination"/>
    <property type="evidence" value="ECO:0000318"/>
    <property type="project" value="GO_Central"/>
</dbReference>
<dbReference type="GO" id="GO:0008630">
    <property type="term" value="P:intrinsic apoptotic signaling pathway in response to DNA damage"/>
    <property type="evidence" value="ECO:0000318"/>
    <property type="project" value="GO_Central"/>
</dbReference>
<dbReference type="GO" id="GO:0031571">
    <property type="term" value="P:mitotic G1 DNA damage checkpoint signaling"/>
    <property type="evidence" value="ECO:0000250"/>
    <property type="project" value="UniProtKB"/>
</dbReference>
<dbReference type="GO" id="GO:0042254">
    <property type="term" value="P:ribosome biogenesis"/>
    <property type="evidence" value="ECO:0007669"/>
    <property type="project" value="UniProtKB-KW"/>
</dbReference>
<dbReference type="GO" id="GO:0000723">
    <property type="term" value="P:telomere maintenance"/>
    <property type="evidence" value="ECO:0000318"/>
    <property type="project" value="GO_Central"/>
</dbReference>
<dbReference type="CDD" id="cd05172">
    <property type="entry name" value="PIKKc_DNA-PK"/>
    <property type="match status" value="1"/>
</dbReference>
<dbReference type="FunFam" id="1.10.1070.11:FF:000018">
    <property type="entry name" value="DNA-dependent protein kinase catalytic subunit"/>
    <property type="match status" value="1"/>
</dbReference>
<dbReference type="FunFam" id="3.30.1010.10:FF:000013">
    <property type="entry name" value="Protein kinase, DNA-activated, catalytic subunit"/>
    <property type="match status" value="1"/>
</dbReference>
<dbReference type="Gene3D" id="1.25.10.10">
    <property type="entry name" value="Leucine-rich Repeat Variant"/>
    <property type="match status" value="1"/>
</dbReference>
<dbReference type="Gene3D" id="1.10.1070.11">
    <property type="entry name" value="Phosphatidylinositol 3-/4-kinase, catalytic domain"/>
    <property type="match status" value="1"/>
</dbReference>
<dbReference type="Gene3D" id="3.30.1010.10">
    <property type="entry name" value="Phosphatidylinositol 3-kinase Catalytic Subunit, Chain A, domain 4"/>
    <property type="match status" value="1"/>
</dbReference>
<dbReference type="InterPro" id="IPR011989">
    <property type="entry name" value="ARM-like"/>
</dbReference>
<dbReference type="InterPro" id="IPR016024">
    <property type="entry name" value="ARM-type_fold"/>
</dbReference>
<dbReference type="InterPro" id="IPR050517">
    <property type="entry name" value="DDR_Repair_Kinase"/>
</dbReference>
<dbReference type="InterPro" id="IPR037706">
    <property type="entry name" value="DNA-PK_dom"/>
</dbReference>
<dbReference type="InterPro" id="IPR046804">
    <property type="entry name" value="DNA-PKcs_N"/>
</dbReference>
<dbReference type="InterPro" id="IPR046803">
    <property type="entry name" value="DNAPKcs_CC1-2"/>
</dbReference>
<dbReference type="InterPro" id="IPR012582">
    <property type="entry name" value="DNAPKcs_CC3"/>
</dbReference>
<dbReference type="InterPro" id="IPR045581">
    <property type="entry name" value="DNAPKcs_CC5"/>
</dbReference>
<dbReference type="InterPro" id="IPR003152">
    <property type="entry name" value="FATC_dom"/>
</dbReference>
<dbReference type="InterPro" id="IPR011009">
    <property type="entry name" value="Kinase-like_dom_sf"/>
</dbReference>
<dbReference type="InterPro" id="IPR000403">
    <property type="entry name" value="PI3/4_kinase_cat_dom"/>
</dbReference>
<dbReference type="InterPro" id="IPR036940">
    <property type="entry name" value="PI3/4_kinase_cat_sf"/>
</dbReference>
<dbReference type="InterPro" id="IPR018936">
    <property type="entry name" value="PI3/4_kinase_CS"/>
</dbReference>
<dbReference type="InterPro" id="IPR003151">
    <property type="entry name" value="PIK-rel_kinase_FAT"/>
</dbReference>
<dbReference type="InterPro" id="IPR014009">
    <property type="entry name" value="PIK_FAT"/>
</dbReference>
<dbReference type="PANTHER" id="PTHR11139">
    <property type="entry name" value="ATAXIA TELANGIECTASIA MUTATED ATM -RELATED"/>
    <property type="match status" value="1"/>
</dbReference>
<dbReference type="PANTHER" id="PTHR11139:SF68">
    <property type="entry name" value="DNA-DEPENDENT PROTEIN KINASE CATALYTIC SUBUNIT"/>
    <property type="match status" value="1"/>
</dbReference>
<dbReference type="Pfam" id="PF20500">
    <property type="entry name" value="DNA-PKcs_N"/>
    <property type="match status" value="1"/>
</dbReference>
<dbReference type="Pfam" id="PF20502">
    <property type="entry name" value="DNAPKcs_CC1-2"/>
    <property type="match status" value="1"/>
</dbReference>
<dbReference type="Pfam" id="PF08163">
    <property type="entry name" value="DNAPKcs_CC3"/>
    <property type="match status" value="1"/>
</dbReference>
<dbReference type="Pfam" id="PF19704">
    <property type="entry name" value="DNAPKcs_CC5"/>
    <property type="match status" value="1"/>
</dbReference>
<dbReference type="Pfam" id="PF02259">
    <property type="entry name" value="FAT"/>
    <property type="match status" value="1"/>
</dbReference>
<dbReference type="Pfam" id="PF02260">
    <property type="entry name" value="FATC"/>
    <property type="match status" value="1"/>
</dbReference>
<dbReference type="Pfam" id="PF00454">
    <property type="entry name" value="PI3_PI4_kinase"/>
    <property type="match status" value="1"/>
</dbReference>
<dbReference type="SMART" id="SM01343">
    <property type="entry name" value="FATC"/>
    <property type="match status" value="1"/>
</dbReference>
<dbReference type="SMART" id="SM01344">
    <property type="entry name" value="NUC194"/>
    <property type="match status" value="1"/>
</dbReference>
<dbReference type="SMART" id="SM00146">
    <property type="entry name" value="PI3Kc"/>
    <property type="match status" value="1"/>
</dbReference>
<dbReference type="SUPFAM" id="SSF48371">
    <property type="entry name" value="ARM repeat"/>
    <property type="match status" value="3"/>
</dbReference>
<dbReference type="SUPFAM" id="SSF56112">
    <property type="entry name" value="Protein kinase-like (PK-like)"/>
    <property type="match status" value="1"/>
</dbReference>
<dbReference type="PROSITE" id="PS51189">
    <property type="entry name" value="FAT"/>
    <property type="match status" value="1"/>
</dbReference>
<dbReference type="PROSITE" id="PS51190">
    <property type="entry name" value="FATC"/>
    <property type="match status" value="1"/>
</dbReference>
<dbReference type="PROSITE" id="PS00915">
    <property type="entry name" value="PI3_4_KINASE_1"/>
    <property type="match status" value="1"/>
</dbReference>
<dbReference type="PROSITE" id="PS00916">
    <property type="entry name" value="PI3_4_KINASE_2"/>
    <property type="match status" value="1"/>
</dbReference>
<dbReference type="PROSITE" id="PS50290">
    <property type="entry name" value="PI3_4_KINASE_3"/>
    <property type="match status" value="1"/>
</dbReference>
<proteinExistence type="evidence at transcript level"/>
<gene>
    <name type="primary">prkdc</name>
</gene>
<keyword id="KW-0067">ATP-binding</keyword>
<keyword id="KW-0227">DNA damage</keyword>
<keyword id="KW-0234">DNA repair</keyword>
<keyword id="KW-0418">Kinase</keyword>
<keyword id="KW-0547">Nucleotide-binding</keyword>
<keyword id="KW-0539">Nucleus</keyword>
<keyword id="KW-0597">Phosphoprotein</keyword>
<keyword id="KW-1185">Reference proteome</keyword>
<keyword id="KW-0677">Repeat</keyword>
<keyword id="KW-0690">Ribosome biogenesis</keyword>
<keyword id="KW-0723">Serine/threonine-protein kinase</keyword>
<keyword id="KW-0802">TPR repeat</keyword>
<keyword id="KW-0808">Transferase</keyword>
<evidence type="ECO:0000250" key="1">
    <source>
        <dbReference type="UniProtKB" id="P78527"/>
    </source>
</evidence>
<evidence type="ECO:0000250" key="2">
    <source>
        <dbReference type="UniProtKB" id="P97313"/>
    </source>
</evidence>
<evidence type="ECO:0000255" key="3">
    <source>
        <dbReference type="PROSITE-ProRule" id="PRU00269"/>
    </source>
</evidence>
<evidence type="ECO:0000255" key="4">
    <source>
        <dbReference type="PROSITE-ProRule" id="PRU00534"/>
    </source>
</evidence>
<evidence type="ECO:0000255" key="5">
    <source>
        <dbReference type="PROSITE-ProRule" id="PRU00535"/>
    </source>
</evidence>
<evidence type="ECO:0000305" key="6"/>
<accession>Q9DEI1</accession>
<accession>O57402</accession>
<feature type="chain" id="PRO_0000225634" description="DNA-dependent protein kinase catalytic subunit">
    <location>
        <begin position="1"/>
        <end position="4146"/>
    </location>
</feature>
<feature type="repeat" description="HEAT 1">
    <location>
        <begin position="308"/>
        <end position="343"/>
    </location>
</feature>
<feature type="repeat" description="HEAT 2">
    <location>
        <begin position="925"/>
        <end position="962"/>
    </location>
</feature>
<feature type="repeat" description="HEAT 3">
    <location>
        <begin position="1026"/>
        <end position="1062"/>
    </location>
</feature>
<feature type="repeat" description="HEAT 4">
    <location>
        <begin position="1075"/>
        <end position="1111"/>
    </location>
</feature>
<feature type="repeat" description="TPR 1">
    <location>
        <begin position="1745"/>
        <end position="1778"/>
    </location>
</feature>
<feature type="repeat" description="TPR 2">
    <location>
        <begin position="1974"/>
        <end position="2007"/>
    </location>
</feature>
<feature type="domain" description="FAT" evidence="4">
    <location>
        <begin position="2873"/>
        <end position="3556"/>
    </location>
</feature>
<feature type="domain" description="PI3K/PI4K catalytic" evidence="3">
    <location>
        <begin position="3739"/>
        <end position="4071"/>
    </location>
</feature>
<feature type="domain" description="FATC" evidence="4 5">
    <location>
        <begin position="4114"/>
        <end position="4146"/>
    </location>
</feature>
<feature type="region of interest" description="G-loop" evidence="3">
    <location>
        <begin position="3745"/>
        <end position="3751"/>
    </location>
</feature>
<feature type="region of interest" description="Catalytic loop" evidence="3">
    <location>
        <begin position="3937"/>
        <end position="3945"/>
    </location>
</feature>
<feature type="region of interest" description="Activation loop" evidence="3">
    <location>
        <begin position="3957"/>
        <end position="3982"/>
    </location>
</feature>
<feature type="modified residue" description="Phosphoserine; by autocatalysis" evidence="1">
    <location>
        <position position="2075"/>
    </location>
</feature>
<feature type="modified residue" description="Phosphothreonine; by autocatalysis" evidence="1">
    <location>
        <position position="2631"/>
    </location>
</feature>
<feature type="modified residue" description="Phosphoserine; by autocatalysis" evidence="1">
    <location>
        <position position="2634"/>
    </location>
</feature>
<feature type="modified residue" description="Phosphothreonine; by autocatalysis" evidence="1">
    <location>
        <position position="2659"/>
    </location>
</feature>
<feature type="modified residue" description="Phosphothreonine; by autocatalysis" evidence="1">
    <location>
        <position position="2668"/>
    </location>
</feature>
<feature type="sequence conflict" description="In Ref. 2; AAC60340." evidence="6" ref="2">
    <original>R</original>
    <variation>H</variation>
    <location>
        <position position="3590"/>
    </location>
</feature>
<feature type="sequence conflict" description="In Ref. 2; AAC60340." evidence="6" ref="2">
    <original>E</original>
    <variation>D</variation>
    <location>
        <position position="3664"/>
    </location>
</feature>